<feature type="chain" id="PRO_0000075641" description="2-C-methyl-D-erythritol 4-phosphate cytidylyltransferase">
    <location>
        <begin position="1"/>
        <end position="227"/>
    </location>
</feature>
<feature type="site" description="Transition state stabilizer" evidence="1">
    <location>
        <position position="15"/>
    </location>
</feature>
<feature type="site" description="Transition state stabilizer" evidence="1">
    <location>
        <position position="22"/>
    </location>
</feature>
<feature type="site" description="Positions MEP for the nucleophilic attack" evidence="1">
    <location>
        <position position="155"/>
    </location>
</feature>
<feature type="site" description="Positions MEP for the nucleophilic attack" evidence="1">
    <location>
        <position position="211"/>
    </location>
</feature>
<comment type="function">
    <text evidence="1">Catalyzes the formation of 4-diphosphocytidyl-2-C-methyl-D-erythritol from CTP and 2-C-methyl-D-erythritol 4-phosphate (MEP).</text>
</comment>
<comment type="catalytic activity">
    <reaction evidence="1">
        <text>2-C-methyl-D-erythritol 4-phosphate + CTP + H(+) = 4-CDP-2-C-methyl-D-erythritol + diphosphate</text>
        <dbReference type="Rhea" id="RHEA:13429"/>
        <dbReference type="ChEBI" id="CHEBI:15378"/>
        <dbReference type="ChEBI" id="CHEBI:33019"/>
        <dbReference type="ChEBI" id="CHEBI:37563"/>
        <dbReference type="ChEBI" id="CHEBI:57823"/>
        <dbReference type="ChEBI" id="CHEBI:58262"/>
        <dbReference type="EC" id="2.7.7.60"/>
    </reaction>
</comment>
<comment type="pathway">
    <text evidence="1">Isoprenoid biosynthesis; isopentenyl diphosphate biosynthesis via DXP pathway; isopentenyl diphosphate from 1-deoxy-D-xylulose 5-phosphate: step 2/6.</text>
</comment>
<comment type="similarity">
    <text evidence="1">Belongs to the IspD/TarI cytidylyltransferase family. IspD subfamily.</text>
</comment>
<proteinExistence type="inferred from homology"/>
<keyword id="KW-0414">Isoprene biosynthesis</keyword>
<keyword id="KW-0548">Nucleotidyltransferase</keyword>
<keyword id="KW-1185">Reference proteome</keyword>
<keyword id="KW-0808">Transferase</keyword>
<gene>
    <name evidence="1" type="primary">ispD</name>
    <name type="ordered locus">TTE2322</name>
</gene>
<organism>
    <name type="scientific">Caldanaerobacter subterraneus subsp. tengcongensis (strain DSM 15242 / JCM 11007 / NBRC 100824 / MB4)</name>
    <name type="common">Thermoanaerobacter tengcongensis</name>
    <dbReference type="NCBI Taxonomy" id="273068"/>
    <lineage>
        <taxon>Bacteria</taxon>
        <taxon>Bacillati</taxon>
        <taxon>Bacillota</taxon>
        <taxon>Clostridia</taxon>
        <taxon>Thermoanaerobacterales</taxon>
        <taxon>Thermoanaerobacteraceae</taxon>
        <taxon>Caldanaerobacter</taxon>
    </lineage>
</organism>
<dbReference type="EC" id="2.7.7.60" evidence="1"/>
<dbReference type="EMBL" id="AE008691">
    <property type="protein sequence ID" value="AAM25463.1"/>
    <property type="molecule type" value="Genomic_DNA"/>
</dbReference>
<dbReference type="RefSeq" id="WP_011026366.1">
    <property type="nucleotide sequence ID" value="NZ_JANUCV010000001.1"/>
</dbReference>
<dbReference type="SMR" id="Q8R7S6"/>
<dbReference type="STRING" id="273068.TTE2322"/>
<dbReference type="KEGG" id="tte:TTE2322"/>
<dbReference type="eggNOG" id="COG1211">
    <property type="taxonomic scope" value="Bacteria"/>
</dbReference>
<dbReference type="HOGENOM" id="CLU_061281_2_2_9"/>
<dbReference type="OrthoDB" id="9806837at2"/>
<dbReference type="UniPathway" id="UPA00056">
    <property type="reaction ID" value="UER00093"/>
</dbReference>
<dbReference type="Proteomes" id="UP000000555">
    <property type="component" value="Chromosome"/>
</dbReference>
<dbReference type="GO" id="GO:0050518">
    <property type="term" value="F:2-C-methyl-D-erythritol 4-phosphate cytidylyltransferase activity"/>
    <property type="evidence" value="ECO:0007669"/>
    <property type="project" value="UniProtKB-UniRule"/>
</dbReference>
<dbReference type="GO" id="GO:0019288">
    <property type="term" value="P:isopentenyl diphosphate biosynthetic process, methylerythritol 4-phosphate pathway"/>
    <property type="evidence" value="ECO:0007669"/>
    <property type="project" value="UniProtKB-UniRule"/>
</dbReference>
<dbReference type="CDD" id="cd02516">
    <property type="entry name" value="CDP-ME_synthetase"/>
    <property type="match status" value="1"/>
</dbReference>
<dbReference type="FunFam" id="3.90.550.10:FF:000003">
    <property type="entry name" value="2-C-methyl-D-erythritol 4-phosphate cytidylyltransferase"/>
    <property type="match status" value="1"/>
</dbReference>
<dbReference type="Gene3D" id="3.90.550.10">
    <property type="entry name" value="Spore Coat Polysaccharide Biosynthesis Protein SpsA, Chain A"/>
    <property type="match status" value="1"/>
</dbReference>
<dbReference type="HAMAP" id="MF_00108">
    <property type="entry name" value="IspD"/>
    <property type="match status" value="1"/>
</dbReference>
<dbReference type="InterPro" id="IPR001228">
    <property type="entry name" value="IspD"/>
</dbReference>
<dbReference type="InterPro" id="IPR034683">
    <property type="entry name" value="IspD/TarI"/>
</dbReference>
<dbReference type="InterPro" id="IPR050088">
    <property type="entry name" value="IspD/TarI_cytidylyltransf_bact"/>
</dbReference>
<dbReference type="InterPro" id="IPR029044">
    <property type="entry name" value="Nucleotide-diphossugar_trans"/>
</dbReference>
<dbReference type="NCBIfam" id="TIGR00453">
    <property type="entry name" value="ispD"/>
    <property type="match status" value="1"/>
</dbReference>
<dbReference type="PANTHER" id="PTHR32125">
    <property type="entry name" value="2-C-METHYL-D-ERYTHRITOL 4-PHOSPHATE CYTIDYLYLTRANSFERASE, CHLOROPLASTIC"/>
    <property type="match status" value="1"/>
</dbReference>
<dbReference type="PANTHER" id="PTHR32125:SF4">
    <property type="entry name" value="2-C-METHYL-D-ERYTHRITOL 4-PHOSPHATE CYTIDYLYLTRANSFERASE, CHLOROPLASTIC"/>
    <property type="match status" value="1"/>
</dbReference>
<dbReference type="Pfam" id="PF01128">
    <property type="entry name" value="IspD"/>
    <property type="match status" value="1"/>
</dbReference>
<dbReference type="SUPFAM" id="SSF53448">
    <property type="entry name" value="Nucleotide-diphospho-sugar transferases"/>
    <property type="match status" value="1"/>
</dbReference>
<evidence type="ECO:0000255" key="1">
    <source>
        <dbReference type="HAMAP-Rule" id="MF_00108"/>
    </source>
</evidence>
<name>ISPD_CALS4</name>
<accession>Q8R7S6</accession>
<protein>
    <recommendedName>
        <fullName evidence="1">2-C-methyl-D-erythritol 4-phosphate cytidylyltransferase</fullName>
        <ecNumber evidence="1">2.7.7.60</ecNumber>
    </recommendedName>
    <alternativeName>
        <fullName evidence="1">4-diphosphocytidyl-2C-methyl-D-erythritol synthase</fullName>
    </alternativeName>
    <alternativeName>
        <fullName evidence="1">MEP cytidylyltransferase</fullName>
        <shortName evidence="1">MCT</shortName>
    </alternativeName>
</protein>
<reference key="1">
    <citation type="journal article" date="2002" name="Genome Res.">
        <title>A complete sequence of the T. tengcongensis genome.</title>
        <authorList>
            <person name="Bao Q."/>
            <person name="Tian Y."/>
            <person name="Li W."/>
            <person name="Xu Z."/>
            <person name="Xuan Z."/>
            <person name="Hu S."/>
            <person name="Dong W."/>
            <person name="Yang J."/>
            <person name="Chen Y."/>
            <person name="Xue Y."/>
            <person name="Xu Y."/>
            <person name="Lai X."/>
            <person name="Huang L."/>
            <person name="Dong X."/>
            <person name="Ma Y."/>
            <person name="Ling L."/>
            <person name="Tan H."/>
            <person name="Chen R."/>
            <person name="Wang J."/>
            <person name="Yu J."/>
            <person name="Yang H."/>
        </authorList>
    </citation>
    <scope>NUCLEOTIDE SEQUENCE [LARGE SCALE GENOMIC DNA]</scope>
    <source>
        <strain>DSM 15242 / JCM 11007 / NBRC 100824 / MB4</strain>
    </source>
</reference>
<sequence length="227" mass="25800">MNVSAVIVAAGRSTRMNKSLNKVYLSIAGKPVLYYSIKAFDEIEWIKEIIVVTSPEETEYCQENVLEKFYWNKPFKIVKGGEERQYSVYNGISVVDKDCEIVAIHDGARPLVTKEIIMEAIKAAYLYKAAAVGVPVKDTIKVADEDNFILDTPDRRYLWAIQTPQVFEKELIVKAHRKALEEGFLGTDDSVLVERMGFKVKLVEGDYKNIKITTPEDLVVAELFLRK</sequence>